<proteinExistence type="inferred from homology"/>
<reference key="1">
    <citation type="journal article" date="2009" name="Environ. Microbiol.">
        <title>Contribution of mobile genetic elements to Desulfovibrio vulgaris genome plasticity.</title>
        <authorList>
            <person name="Walker C.B."/>
            <person name="Stolyar S."/>
            <person name="Chivian D."/>
            <person name="Pinel N."/>
            <person name="Gabster J.A."/>
            <person name="Dehal P.S."/>
            <person name="He Z."/>
            <person name="Yang Z.K."/>
            <person name="Yen H.C."/>
            <person name="Zhou J."/>
            <person name="Wall J.D."/>
            <person name="Hazen T.C."/>
            <person name="Arkin A.P."/>
            <person name="Stahl D.A."/>
        </authorList>
    </citation>
    <scope>NUCLEOTIDE SEQUENCE [LARGE SCALE GENOMIC DNA]</scope>
    <source>
        <strain>DP4</strain>
    </source>
</reference>
<protein>
    <recommendedName>
        <fullName evidence="1">Aspartate carbamoyltransferase catalytic subunit</fullName>
        <ecNumber evidence="1">2.1.3.2</ecNumber>
    </recommendedName>
    <alternativeName>
        <fullName evidence="1">Aspartate transcarbamylase</fullName>
        <shortName evidence="1">ATCase</shortName>
    </alternativeName>
</protein>
<accession>A1VAM1</accession>
<feature type="chain" id="PRO_0000301569" description="Aspartate carbamoyltransferase catalytic subunit">
    <location>
        <begin position="1"/>
        <end position="317"/>
    </location>
</feature>
<feature type="binding site" evidence="1">
    <location>
        <position position="64"/>
    </location>
    <ligand>
        <name>carbamoyl phosphate</name>
        <dbReference type="ChEBI" id="CHEBI:58228"/>
    </ligand>
</feature>
<feature type="binding site" evidence="1">
    <location>
        <position position="65"/>
    </location>
    <ligand>
        <name>carbamoyl phosphate</name>
        <dbReference type="ChEBI" id="CHEBI:58228"/>
    </ligand>
</feature>
<feature type="binding site" evidence="1">
    <location>
        <position position="92"/>
    </location>
    <ligand>
        <name>L-aspartate</name>
        <dbReference type="ChEBI" id="CHEBI:29991"/>
    </ligand>
</feature>
<feature type="binding site" evidence="1">
    <location>
        <position position="114"/>
    </location>
    <ligand>
        <name>carbamoyl phosphate</name>
        <dbReference type="ChEBI" id="CHEBI:58228"/>
    </ligand>
</feature>
<feature type="binding site" evidence="1">
    <location>
        <position position="142"/>
    </location>
    <ligand>
        <name>carbamoyl phosphate</name>
        <dbReference type="ChEBI" id="CHEBI:58228"/>
    </ligand>
</feature>
<feature type="binding site" evidence="1">
    <location>
        <position position="145"/>
    </location>
    <ligand>
        <name>carbamoyl phosphate</name>
        <dbReference type="ChEBI" id="CHEBI:58228"/>
    </ligand>
</feature>
<feature type="binding site" evidence="1">
    <location>
        <position position="176"/>
    </location>
    <ligand>
        <name>L-aspartate</name>
        <dbReference type="ChEBI" id="CHEBI:29991"/>
    </ligand>
</feature>
<feature type="binding site" evidence="1">
    <location>
        <position position="230"/>
    </location>
    <ligand>
        <name>L-aspartate</name>
        <dbReference type="ChEBI" id="CHEBI:29991"/>
    </ligand>
</feature>
<feature type="binding site" evidence="1">
    <location>
        <position position="271"/>
    </location>
    <ligand>
        <name>carbamoyl phosphate</name>
        <dbReference type="ChEBI" id="CHEBI:58228"/>
    </ligand>
</feature>
<feature type="binding site" evidence="1">
    <location>
        <position position="272"/>
    </location>
    <ligand>
        <name>carbamoyl phosphate</name>
        <dbReference type="ChEBI" id="CHEBI:58228"/>
    </ligand>
</feature>
<sequence length="317" mass="34663">MQNETRSLWPHKDLLDVDQLSKDELLHLLDTAAQFHEINRRPVKKVPTLKGKSVILFFAEPSTRTKTSFDVAGKRLSADTFSLAKSGSSLQKGESLKDTALTLEAMNPDVLVIRHSSSGAARFLADRLACGVVNAGDGWHAHPTQALLDCYSLRQVWGDTFEGRTLCILGDIAHSRVARSNVKLLTSLGVRVRLCAPRTLLPAGVGNWPVEVFTDLDAAVRDADAVMCLRLQLERQQAGLLPDLREYSNRYCLTPRRLELAKPEARVLHPGPMNRGLEIASSIADAPASLVLDQVAAGVATRMAILFLLATRTDGGR</sequence>
<dbReference type="EC" id="2.1.3.2" evidence="1"/>
<dbReference type="EMBL" id="CP000527">
    <property type="protein sequence ID" value="ABM27487.1"/>
    <property type="molecule type" value="Genomic_DNA"/>
</dbReference>
<dbReference type="RefSeq" id="WP_011791624.1">
    <property type="nucleotide sequence ID" value="NC_008751.1"/>
</dbReference>
<dbReference type="SMR" id="A1VAM1"/>
<dbReference type="KEGG" id="dvl:Dvul_0464"/>
<dbReference type="HOGENOM" id="CLU_043846_2_0_7"/>
<dbReference type="UniPathway" id="UPA00070">
    <property type="reaction ID" value="UER00116"/>
</dbReference>
<dbReference type="Proteomes" id="UP000009173">
    <property type="component" value="Chromosome"/>
</dbReference>
<dbReference type="GO" id="GO:0005829">
    <property type="term" value="C:cytosol"/>
    <property type="evidence" value="ECO:0007669"/>
    <property type="project" value="TreeGrafter"/>
</dbReference>
<dbReference type="GO" id="GO:0016597">
    <property type="term" value="F:amino acid binding"/>
    <property type="evidence" value="ECO:0007669"/>
    <property type="project" value="InterPro"/>
</dbReference>
<dbReference type="GO" id="GO:0004070">
    <property type="term" value="F:aspartate carbamoyltransferase activity"/>
    <property type="evidence" value="ECO:0007669"/>
    <property type="project" value="UniProtKB-UniRule"/>
</dbReference>
<dbReference type="GO" id="GO:0006207">
    <property type="term" value="P:'de novo' pyrimidine nucleobase biosynthetic process"/>
    <property type="evidence" value="ECO:0007669"/>
    <property type="project" value="InterPro"/>
</dbReference>
<dbReference type="GO" id="GO:0044205">
    <property type="term" value="P:'de novo' UMP biosynthetic process"/>
    <property type="evidence" value="ECO:0007669"/>
    <property type="project" value="UniProtKB-UniRule"/>
</dbReference>
<dbReference type="GO" id="GO:0006520">
    <property type="term" value="P:amino acid metabolic process"/>
    <property type="evidence" value="ECO:0007669"/>
    <property type="project" value="InterPro"/>
</dbReference>
<dbReference type="FunFam" id="3.40.50.1370:FF:000007">
    <property type="entry name" value="Aspartate carbamoyltransferase"/>
    <property type="match status" value="1"/>
</dbReference>
<dbReference type="Gene3D" id="3.40.50.1370">
    <property type="entry name" value="Aspartate/ornithine carbamoyltransferase"/>
    <property type="match status" value="2"/>
</dbReference>
<dbReference type="HAMAP" id="MF_00001">
    <property type="entry name" value="Asp_carb_tr"/>
    <property type="match status" value="1"/>
</dbReference>
<dbReference type="InterPro" id="IPR006132">
    <property type="entry name" value="Asp/Orn_carbamoyltranf_P-bd"/>
</dbReference>
<dbReference type="InterPro" id="IPR006130">
    <property type="entry name" value="Asp/Orn_carbamoylTrfase"/>
</dbReference>
<dbReference type="InterPro" id="IPR036901">
    <property type="entry name" value="Asp/Orn_carbamoylTrfase_sf"/>
</dbReference>
<dbReference type="InterPro" id="IPR002082">
    <property type="entry name" value="Asp_carbamoyltransf"/>
</dbReference>
<dbReference type="InterPro" id="IPR006131">
    <property type="entry name" value="Asp_carbamoyltransf_Asp/Orn-bd"/>
</dbReference>
<dbReference type="NCBIfam" id="TIGR00670">
    <property type="entry name" value="asp_carb_tr"/>
    <property type="match status" value="1"/>
</dbReference>
<dbReference type="NCBIfam" id="NF002032">
    <property type="entry name" value="PRK00856.1"/>
    <property type="match status" value="1"/>
</dbReference>
<dbReference type="PANTHER" id="PTHR45753:SF6">
    <property type="entry name" value="ASPARTATE CARBAMOYLTRANSFERASE"/>
    <property type="match status" value="1"/>
</dbReference>
<dbReference type="PANTHER" id="PTHR45753">
    <property type="entry name" value="ORNITHINE CARBAMOYLTRANSFERASE, MITOCHONDRIAL"/>
    <property type="match status" value="1"/>
</dbReference>
<dbReference type="Pfam" id="PF00185">
    <property type="entry name" value="OTCace"/>
    <property type="match status" value="1"/>
</dbReference>
<dbReference type="Pfam" id="PF02729">
    <property type="entry name" value="OTCace_N"/>
    <property type="match status" value="1"/>
</dbReference>
<dbReference type="PRINTS" id="PR00100">
    <property type="entry name" value="AOTCASE"/>
</dbReference>
<dbReference type="PRINTS" id="PR00101">
    <property type="entry name" value="ATCASE"/>
</dbReference>
<dbReference type="SUPFAM" id="SSF53671">
    <property type="entry name" value="Aspartate/ornithine carbamoyltransferase"/>
    <property type="match status" value="1"/>
</dbReference>
<dbReference type="PROSITE" id="PS00097">
    <property type="entry name" value="CARBAMOYLTRANSFERASE"/>
    <property type="match status" value="1"/>
</dbReference>
<gene>
    <name evidence="1" type="primary">pyrB</name>
    <name type="ordered locus">Dvul_0464</name>
</gene>
<organism>
    <name type="scientific">Nitratidesulfovibrio vulgaris (strain DP4)</name>
    <name type="common">Desulfovibrio vulgaris</name>
    <dbReference type="NCBI Taxonomy" id="391774"/>
    <lineage>
        <taxon>Bacteria</taxon>
        <taxon>Pseudomonadati</taxon>
        <taxon>Thermodesulfobacteriota</taxon>
        <taxon>Desulfovibrionia</taxon>
        <taxon>Desulfovibrionales</taxon>
        <taxon>Desulfovibrionaceae</taxon>
        <taxon>Nitratidesulfovibrio</taxon>
    </lineage>
</organism>
<keyword id="KW-0665">Pyrimidine biosynthesis</keyword>
<keyword id="KW-0808">Transferase</keyword>
<name>PYRB_NITV4</name>
<comment type="function">
    <text evidence="1">Catalyzes the condensation of carbamoyl phosphate and aspartate to form carbamoyl aspartate and inorganic phosphate, the committed step in the de novo pyrimidine nucleotide biosynthesis pathway.</text>
</comment>
<comment type="catalytic activity">
    <reaction evidence="1">
        <text>carbamoyl phosphate + L-aspartate = N-carbamoyl-L-aspartate + phosphate + H(+)</text>
        <dbReference type="Rhea" id="RHEA:20013"/>
        <dbReference type="ChEBI" id="CHEBI:15378"/>
        <dbReference type="ChEBI" id="CHEBI:29991"/>
        <dbReference type="ChEBI" id="CHEBI:32814"/>
        <dbReference type="ChEBI" id="CHEBI:43474"/>
        <dbReference type="ChEBI" id="CHEBI:58228"/>
        <dbReference type="EC" id="2.1.3.2"/>
    </reaction>
</comment>
<comment type="pathway">
    <text evidence="1">Pyrimidine metabolism; UMP biosynthesis via de novo pathway; (S)-dihydroorotate from bicarbonate: step 2/3.</text>
</comment>
<comment type="subunit">
    <text evidence="1">Heterododecamer (2C3:3R2) of six catalytic PyrB chains organized as two trimers (C3), and six regulatory PyrI chains organized as three dimers (R2).</text>
</comment>
<comment type="similarity">
    <text evidence="1">Belongs to the aspartate/ornithine carbamoyltransferase superfamily. ATCase family.</text>
</comment>
<evidence type="ECO:0000255" key="1">
    <source>
        <dbReference type="HAMAP-Rule" id="MF_00001"/>
    </source>
</evidence>